<organism>
    <name type="scientific">Klebsiella aerogenes (strain ATCC 13048 / DSM 30053 / CCUG 1429 / JCM 1235 / KCTC 2190 / NBRC 13534 / NCIMB 10102 / NCTC 10006 / CDC 819-56)</name>
    <name type="common">Enterobacter aerogenes</name>
    <dbReference type="NCBI Taxonomy" id="1028307"/>
    <lineage>
        <taxon>Bacteria</taxon>
        <taxon>Pseudomonadati</taxon>
        <taxon>Pseudomonadota</taxon>
        <taxon>Gammaproteobacteria</taxon>
        <taxon>Enterobacterales</taxon>
        <taxon>Enterobacteriaceae</taxon>
        <taxon>Klebsiella/Raoultella group</taxon>
        <taxon>Klebsiella</taxon>
    </lineage>
</organism>
<feature type="chain" id="PRO_0000456294" description="Probable succinate transporter subunit YjjB">
    <location>
        <begin position="1"/>
        <end position="157"/>
    </location>
</feature>
<feature type="transmembrane region" description="Helical" evidence="1">
    <location>
        <begin position="10"/>
        <end position="30"/>
    </location>
</feature>
<feature type="transmembrane region" description="Helical" evidence="1">
    <location>
        <begin position="55"/>
        <end position="75"/>
    </location>
</feature>
<feature type="transmembrane region" description="Helical" evidence="1">
    <location>
        <begin position="87"/>
        <end position="107"/>
    </location>
</feature>
<feature type="transmembrane region" description="Helical" evidence="1">
    <location>
        <begin position="129"/>
        <end position="149"/>
    </location>
</feature>
<sequence>MGIISYLFDLAQDMALAAIPAVGFAMVFNVPQRALRWCALLGAIGHGSRMVMMSAGFNIEWATFLAALLVGSIGIQWSRWYLAHPKIFTVAAVIPMFPGISAYTAMISAVKISHFGYSEEMMIMLLSNFLKASSIVGALSIGLSIPGLWLYRKRPRV</sequence>
<accession>A0A0H3FQN0</accession>
<name>YJJB_KLEAK</name>
<keyword id="KW-0997">Cell inner membrane</keyword>
<keyword id="KW-1003">Cell membrane</keyword>
<keyword id="KW-0472">Membrane</keyword>
<keyword id="KW-1185">Reference proteome</keyword>
<keyword id="KW-0812">Transmembrane</keyword>
<keyword id="KW-1133">Transmembrane helix</keyword>
<keyword id="KW-0813">Transport</keyword>
<dbReference type="EMBL" id="CP002824">
    <property type="protein sequence ID" value="AEG97012.1"/>
    <property type="molecule type" value="Genomic_DNA"/>
</dbReference>
<dbReference type="RefSeq" id="WP_015704312.1">
    <property type="nucleotide sequence ID" value="NC_015663.1"/>
</dbReference>
<dbReference type="RefSeq" id="YP_004592291.1">
    <property type="nucleotide sequence ID" value="NC_015663.1"/>
</dbReference>
<dbReference type="KEGG" id="eae:EAE_10480"/>
<dbReference type="PATRIC" id="fig|1028307.3.peg.2086"/>
<dbReference type="eggNOG" id="COG3610">
    <property type="taxonomic scope" value="Bacteria"/>
</dbReference>
<dbReference type="HOGENOM" id="CLU_117642_1_0_6"/>
<dbReference type="OrthoDB" id="9810047at2"/>
<dbReference type="Proteomes" id="UP000008881">
    <property type="component" value="Chromosome"/>
</dbReference>
<dbReference type="GO" id="GO:0005886">
    <property type="term" value="C:plasma membrane"/>
    <property type="evidence" value="ECO:0007669"/>
    <property type="project" value="UniProtKB-SubCell"/>
</dbReference>
<dbReference type="GO" id="GO:0015744">
    <property type="term" value="P:succinate transport"/>
    <property type="evidence" value="ECO:0007669"/>
    <property type="project" value="UniProtKB-UniRule"/>
</dbReference>
<dbReference type="HAMAP" id="MF_01191">
    <property type="entry name" value="YjjB"/>
    <property type="match status" value="1"/>
</dbReference>
<dbReference type="InterPro" id="IPR024528">
    <property type="entry name" value="ThrE_2"/>
</dbReference>
<dbReference type="InterPro" id="IPR050539">
    <property type="entry name" value="ThrE_Dicarb/AminoAcid_Exp"/>
</dbReference>
<dbReference type="InterPro" id="IPR020914">
    <property type="entry name" value="YjjB"/>
</dbReference>
<dbReference type="NCBIfam" id="NF007391">
    <property type="entry name" value="PRK09917.1"/>
    <property type="match status" value="1"/>
</dbReference>
<dbReference type="PANTHER" id="PTHR34390:SF1">
    <property type="entry name" value="SUCCINATE TRANSPORTER SUBUNIT YJJB-RELATED"/>
    <property type="match status" value="1"/>
</dbReference>
<dbReference type="PANTHER" id="PTHR34390">
    <property type="entry name" value="UPF0442 PROTEIN YJJB-RELATED"/>
    <property type="match status" value="1"/>
</dbReference>
<dbReference type="Pfam" id="PF12821">
    <property type="entry name" value="ThrE_2"/>
    <property type="match status" value="1"/>
</dbReference>
<evidence type="ECO:0000255" key="1">
    <source>
        <dbReference type="HAMAP-Rule" id="MF_01191"/>
    </source>
</evidence>
<evidence type="ECO:0000269" key="2">
    <source>
    </source>
</evidence>
<evidence type="ECO:0000303" key="3">
    <source>
    </source>
</evidence>
<evidence type="ECO:0000305" key="4"/>
<evidence type="ECO:0000305" key="5">
    <source>
    </source>
</evidence>
<evidence type="ECO:0000312" key="6">
    <source>
        <dbReference type="EMBL" id="AEG97012.1"/>
    </source>
</evidence>
<comment type="function">
    <text evidence="2">Involved in succinate export with YjjP. Both proteins are required for export (PubMed:29395959). Participates in succinate export, but also in the export of other dicarboxylates, such as fumarate and malate (PubMed:29395959). Contributes to succinate production under both aerobic and anaerobic conditions, and increases fumarate and malate production during anaerobic succinate production (PubMed:29395959).</text>
</comment>
<comment type="subunit">
    <text evidence="1 2">The transporter is composed of YjjB and YjjP.</text>
</comment>
<comment type="subcellular location">
    <subcellularLocation>
        <location evidence="1 5">Cell inner membrane</location>
        <topology evidence="1">Multi-pass membrane protein</topology>
    </subcellularLocation>
</comment>
<comment type="miscellaneous">
    <text evidence="3">YjjPB constitutes a split-type ThrE family transporter.</text>
</comment>
<comment type="similarity">
    <text evidence="1 4">Belongs to the ThrE exporter (TC 2.A.79) family.</text>
</comment>
<proteinExistence type="evidence at protein level"/>
<gene>
    <name evidence="1 3" type="primary">yjjB</name>
    <name evidence="6" type="ordered locus">EAE_10480</name>
</gene>
<reference key="1">
    <citation type="journal article" date="2012" name="J. Bacteriol.">
        <title>Complete genome sequence of Enterobacter aerogenes KCTC 2190.</title>
        <authorList>
            <person name="Shin S.H."/>
            <person name="Kim S."/>
            <person name="Kim J.Y."/>
            <person name="Lee S."/>
            <person name="Um Y."/>
            <person name="Oh M.K."/>
            <person name="Kim Y.R."/>
            <person name="Lee J."/>
            <person name="Yang K.S."/>
        </authorList>
    </citation>
    <scope>NUCLEOTIDE SEQUENCE [LARGE SCALE GENOMIC DNA]</scope>
    <source>
        <strain>ATCC 13048 / DSM 30053 / CCUG 1429 / JCM 1235 / KCTC 2190 / NBRC 13534 / NCIMB 10102 / NCTC 10006 / CDC 819-56</strain>
    </source>
</reference>
<reference key="2">
    <citation type="journal article" date="2018" name="J. Biosci. Bioeng.">
        <title>Identification of EayjjPB encoding a dicarboxylate transporter important for succinate production under aerobic and anaerobic conditions in Enterobacter aerogenes.</title>
        <authorList>
            <person name="Fukui K."/>
            <person name="Nanatani K."/>
            <person name="Hara Y."/>
            <person name="Tokura M."/>
            <person name="Abe K."/>
        </authorList>
    </citation>
    <scope>FUNCTION</scope>
    <scope>SUBUNIT</scope>
    <source>
        <strain>AJ110637</strain>
    </source>
</reference>
<protein>
    <recommendedName>
        <fullName evidence="1 4">Probable succinate transporter subunit YjjB</fullName>
    </recommendedName>
</protein>